<reference key="1">
    <citation type="journal article" date="2005" name="Science">
        <title>The transcriptional landscape of the mammalian genome.</title>
        <authorList>
            <person name="Carninci P."/>
            <person name="Kasukawa T."/>
            <person name="Katayama S."/>
            <person name="Gough J."/>
            <person name="Frith M.C."/>
            <person name="Maeda N."/>
            <person name="Oyama R."/>
            <person name="Ravasi T."/>
            <person name="Lenhard B."/>
            <person name="Wells C."/>
            <person name="Kodzius R."/>
            <person name="Shimokawa K."/>
            <person name="Bajic V.B."/>
            <person name="Brenner S.E."/>
            <person name="Batalov S."/>
            <person name="Forrest A.R."/>
            <person name="Zavolan M."/>
            <person name="Davis M.J."/>
            <person name="Wilming L.G."/>
            <person name="Aidinis V."/>
            <person name="Allen J.E."/>
            <person name="Ambesi-Impiombato A."/>
            <person name="Apweiler R."/>
            <person name="Aturaliya R.N."/>
            <person name="Bailey T.L."/>
            <person name="Bansal M."/>
            <person name="Baxter L."/>
            <person name="Beisel K.W."/>
            <person name="Bersano T."/>
            <person name="Bono H."/>
            <person name="Chalk A.M."/>
            <person name="Chiu K.P."/>
            <person name="Choudhary V."/>
            <person name="Christoffels A."/>
            <person name="Clutterbuck D.R."/>
            <person name="Crowe M.L."/>
            <person name="Dalla E."/>
            <person name="Dalrymple B.P."/>
            <person name="de Bono B."/>
            <person name="Della Gatta G."/>
            <person name="di Bernardo D."/>
            <person name="Down T."/>
            <person name="Engstrom P."/>
            <person name="Fagiolini M."/>
            <person name="Faulkner G."/>
            <person name="Fletcher C.F."/>
            <person name="Fukushima T."/>
            <person name="Furuno M."/>
            <person name="Futaki S."/>
            <person name="Gariboldi M."/>
            <person name="Georgii-Hemming P."/>
            <person name="Gingeras T.R."/>
            <person name="Gojobori T."/>
            <person name="Green R.E."/>
            <person name="Gustincich S."/>
            <person name="Harbers M."/>
            <person name="Hayashi Y."/>
            <person name="Hensch T.K."/>
            <person name="Hirokawa N."/>
            <person name="Hill D."/>
            <person name="Huminiecki L."/>
            <person name="Iacono M."/>
            <person name="Ikeo K."/>
            <person name="Iwama A."/>
            <person name="Ishikawa T."/>
            <person name="Jakt M."/>
            <person name="Kanapin A."/>
            <person name="Katoh M."/>
            <person name="Kawasawa Y."/>
            <person name="Kelso J."/>
            <person name="Kitamura H."/>
            <person name="Kitano H."/>
            <person name="Kollias G."/>
            <person name="Krishnan S.P."/>
            <person name="Kruger A."/>
            <person name="Kummerfeld S.K."/>
            <person name="Kurochkin I.V."/>
            <person name="Lareau L.F."/>
            <person name="Lazarevic D."/>
            <person name="Lipovich L."/>
            <person name="Liu J."/>
            <person name="Liuni S."/>
            <person name="McWilliam S."/>
            <person name="Madan Babu M."/>
            <person name="Madera M."/>
            <person name="Marchionni L."/>
            <person name="Matsuda H."/>
            <person name="Matsuzawa S."/>
            <person name="Miki H."/>
            <person name="Mignone F."/>
            <person name="Miyake S."/>
            <person name="Morris K."/>
            <person name="Mottagui-Tabar S."/>
            <person name="Mulder N."/>
            <person name="Nakano N."/>
            <person name="Nakauchi H."/>
            <person name="Ng P."/>
            <person name="Nilsson R."/>
            <person name="Nishiguchi S."/>
            <person name="Nishikawa S."/>
            <person name="Nori F."/>
            <person name="Ohara O."/>
            <person name="Okazaki Y."/>
            <person name="Orlando V."/>
            <person name="Pang K.C."/>
            <person name="Pavan W.J."/>
            <person name="Pavesi G."/>
            <person name="Pesole G."/>
            <person name="Petrovsky N."/>
            <person name="Piazza S."/>
            <person name="Reed J."/>
            <person name="Reid J.F."/>
            <person name="Ring B.Z."/>
            <person name="Ringwald M."/>
            <person name="Rost B."/>
            <person name="Ruan Y."/>
            <person name="Salzberg S.L."/>
            <person name="Sandelin A."/>
            <person name="Schneider C."/>
            <person name="Schoenbach C."/>
            <person name="Sekiguchi K."/>
            <person name="Semple C.A."/>
            <person name="Seno S."/>
            <person name="Sessa L."/>
            <person name="Sheng Y."/>
            <person name="Shibata Y."/>
            <person name="Shimada H."/>
            <person name="Shimada K."/>
            <person name="Silva D."/>
            <person name="Sinclair B."/>
            <person name="Sperling S."/>
            <person name="Stupka E."/>
            <person name="Sugiura K."/>
            <person name="Sultana R."/>
            <person name="Takenaka Y."/>
            <person name="Taki K."/>
            <person name="Tammoja K."/>
            <person name="Tan S.L."/>
            <person name="Tang S."/>
            <person name="Taylor M.S."/>
            <person name="Tegner J."/>
            <person name="Teichmann S.A."/>
            <person name="Ueda H.R."/>
            <person name="van Nimwegen E."/>
            <person name="Verardo R."/>
            <person name="Wei C.L."/>
            <person name="Yagi K."/>
            <person name="Yamanishi H."/>
            <person name="Zabarovsky E."/>
            <person name="Zhu S."/>
            <person name="Zimmer A."/>
            <person name="Hide W."/>
            <person name="Bult C."/>
            <person name="Grimmond S.M."/>
            <person name="Teasdale R.D."/>
            <person name="Liu E.T."/>
            <person name="Brusic V."/>
            <person name="Quackenbush J."/>
            <person name="Wahlestedt C."/>
            <person name="Mattick J.S."/>
            <person name="Hume D.A."/>
            <person name="Kai C."/>
            <person name="Sasaki D."/>
            <person name="Tomaru Y."/>
            <person name="Fukuda S."/>
            <person name="Kanamori-Katayama M."/>
            <person name="Suzuki M."/>
            <person name="Aoki J."/>
            <person name="Arakawa T."/>
            <person name="Iida J."/>
            <person name="Imamura K."/>
            <person name="Itoh M."/>
            <person name="Kato T."/>
            <person name="Kawaji H."/>
            <person name="Kawagashira N."/>
            <person name="Kawashima T."/>
            <person name="Kojima M."/>
            <person name="Kondo S."/>
            <person name="Konno H."/>
            <person name="Nakano K."/>
            <person name="Ninomiya N."/>
            <person name="Nishio T."/>
            <person name="Okada M."/>
            <person name="Plessy C."/>
            <person name="Shibata K."/>
            <person name="Shiraki T."/>
            <person name="Suzuki S."/>
            <person name="Tagami M."/>
            <person name="Waki K."/>
            <person name="Watahiki A."/>
            <person name="Okamura-Oho Y."/>
            <person name="Suzuki H."/>
            <person name="Kawai J."/>
            <person name="Hayashizaki Y."/>
        </authorList>
    </citation>
    <scope>NUCLEOTIDE SEQUENCE [LARGE SCALE MRNA]</scope>
    <source>
        <strain>C57BL/6J</strain>
        <tissue>Diencephalon</tissue>
        <tissue>Thymus</tissue>
    </source>
</reference>
<reference key="2">
    <citation type="journal article" date="2003" name="Proc. Natl. Acad. Sci. U.S.A.">
        <title>The G protein-coupled receptor repertoires of human and mouse.</title>
        <authorList>
            <person name="Vassilatis D.K."/>
            <person name="Hohmann J.G."/>
            <person name="Zeng H."/>
            <person name="Li F."/>
            <person name="Ranchalis J.E."/>
            <person name="Mortrud M.T."/>
            <person name="Brown A."/>
            <person name="Rodriguez S.S."/>
            <person name="Weller J.R."/>
            <person name="Wright A.C."/>
            <person name="Bergmann J.E."/>
            <person name="Gaitanaris G.A."/>
        </authorList>
    </citation>
    <scope>NUCLEOTIDE SEQUENCE [LARGE SCALE MRNA] OF 176-222</scope>
</reference>
<reference key="3">
    <citation type="journal article" date="2004" name="Science">
        <title>Characterization of a common susceptibility locus for asthma-related traits.</title>
        <authorList>
            <person name="Laitinen T."/>
            <person name="Polvi A."/>
            <person name="Rydman P."/>
            <person name="Vendelin J."/>
            <person name="Pulkkinen V."/>
            <person name="Salmikangas P."/>
            <person name="Maekelae S."/>
            <person name="Rehn M."/>
            <person name="Pirskanen A."/>
            <person name="Rautanen A."/>
            <person name="Zucchelli M."/>
            <person name="Gullsten H."/>
            <person name="Leino M."/>
            <person name="Alenius H."/>
            <person name="Petaeys T."/>
            <person name="Haahtela T."/>
            <person name="Laitinen A."/>
            <person name="Laprise C."/>
            <person name="Hudson T.J."/>
            <person name="Laitinen L.A."/>
            <person name="Kere J."/>
        </authorList>
    </citation>
    <scope>INDUCTION</scope>
</reference>
<dbReference type="EMBL" id="AK033957">
    <property type="protein sequence ID" value="BAC28526.1"/>
    <property type="molecule type" value="mRNA"/>
</dbReference>
<dbReference type="EMBL" id="AK041451">
    <property type="protein sequence ID" value="BAC30949.1"/>
    <property type="status" value="ALT_INIT"/>
    <property type="molecule type" value="mRNA"/>
</dbReference>
<dbReference type="EMBL" id="AY255574">
    <property type="protein sequence ID" value="AAO85086.1"/>
    <property type="molecule type" value="mRNA"/>
</dbReference>
<dbReference type="CCDS" id="CCDS22930.1"/>
<dbReference type="RefSeq" id="NP_783609.1">
    <property type="nucleotide sequence ID" value="NM_175678.3"/>
</dbReference>
<dbReference type="RefSeq" id="XP_017168906.1">
    <property type="nucleotide sequence ID" value="XM_017313417.3"/>
</dbReference>
<dbReference type="RefSeq" id="XP_036010940.1">
    <property type="nucleotide sequence ID" value="XM_036155047.1"/>
</dbReference>
<dbReference type="SMR" id="Q8BZP8"/>
<dbReference type="FunCoup" id="Q8BZP8">
    <property type="interactions" value="636"/>
</dbReference>
<dbReference type="STRING" id="10090.ENSMUSP00000056432"/>
<dbReference type="BindingDB" id="Q8BZP8"/>
<dbReference type="ChEMBL" id="CHEMBL5497"/>
<dbReference type="GuidetoPHARMACOLOGY" id="302"/>
<dbReference type="GlyCosmos" id="Q8BZP8">
    <property type="glycosylation" value="2 sites, No reported glycans"/>
</dbReference>
<dbReference type="GlyGen" id="Q8BZP8">
    <property type="glycosylation" value="2 sites"/>
</dbReference>
<dbReference type="PhosphoSitePlus" id="Q8BZP8"/>
<dbReference type="PaxDb" id="10090-ENSMUSP00000056432"/>
<dbReference type="Antibodypedia" id="1941">
    <property type="antibodies" value="188 antibodies from 27 providers"/>
</dbReference>
<dbReference type="DNASU" id="319239"/>
<dbReference type="Ensembl" id="ENSMUST00000059650.11">
    <property type="protein sequence ID" value="ENSMUSP00000056432.5"/>
    <property type="gene ID" value="ENSMUSG00000043659.12"/>
</dbReference>
<dbReference type="GeneID" id="319239"/>
<dbReference type="KEGG" id="mmu:319239"/>
<dbReference type="UCSC" id="uc009oox.1">
    <property type="organism name" value="mouse"/>
</dbReference>
<dbReference type="AGR" id="MGI:2441738"/>
<dbReference type="CTD" id="387129"/>
<dbReference type="MGI" id="MGI:2441738">
    <property type="gene designation" value="Npsr1"/>
</dbReference>
<dbReference type="VEuPathDB" id="HostDB:ENSMUSG00000043659"/>
<dbReference type="eggNOG" id="KOG3184">
    <property type="taxonomic scope" value="Eukaryota"/>
</dbReference>
<dbReference type="eggNOG" id="KOG3656">
    <property type="taxonomic scope" value="Eukaryota"/>
</dbReference>
<dbReference type="GeneTree" id="ENSGT00940000155094"/>
<dbReference type="HOGENOM" id="CLU_009579_15_0_1"/>
<dbReference type="InParanoid" id="Q8BZP8"/>
<dbReference type="OMA" id="NRLCPPF"/>
<dbReference type="OrthoDB" id="5987909at2759"/>
<dbReference type="PhylomeDB" id="Q8BZP8"/>
<dbReference type="TreeFam" id="TF106499"/>
<dbReference type="Reactome" id="R-MMU-375276">
    <property type="pathway name" value="Peptide ligand-binding receptors"/>
</dbReference>
<dbReference type="Reactome" id="R-MMU-416476">
    <property type="pathway name" value="G alpha (q) signalling events"/>
</dbReference>
<dbReference type="Reactome" id="R-MMU-418555">
    <property type="pathway name" value="G alpha (s) signalling events"/>
</dbReference>
<dbReference type="BioGRID-ORCS" id="319239">
    <property type="hits" value="2 hits in 79 CRISPR screens"/>
</dbReference>
<dbReference type="ChiTaRS" id="Npsr1">
    <property type="organism name" value="mouse"/>
</dbReference>
<dbReference type="PRO" id="PR:Q8BZP8"/>
<dbReference type="Proteomes" id="UP000000589">
    <property type="component" value="Chromosome 9"/>
</dbReference>
<dbReference type="RNAct" id="Q8BZP8">
    <property type="molecule type" value="protein"/>
</dbReference>
<dbReference type="Bgee" id="ENSMUSG00000043659">
    <property type="expression patterns" value="Expressed in dentate gyrus of hippocampal formation granule cell and 13 other cell types or tissues"/>
</dbReference>
<dbReference type="ExpressionAtlas" id="Q8BZP8">
    <property type="expression patterns" value="baseline and differential"/>
</dbReference>
<dbReference type="GO" id="GO:0005886">
    <property type="term" value="C:plasma membrane"/>
    <property type="evidence" value="ECO:0000250"/>
    <property type="project" value="UniProtKB"/>
</dbReference>
<dbReference type="GO" id="GO:0008188">
    <property type="term" value="F:neuropeptide receptor activity"/>
    <property type="evidence" value="ECO:0000250"/>
    <property type="project" value="UniProtKB"/>
</dbReference>
<dbReference type="GO" id="GO:0005000">
    <property type="term" value="F:vasopressin receptor activity"/>
    <property type="evidence" value="ECO:0007669"/>
    <property type="project" value="InterPro"/>
</dbReference>
<dbReference type="GO" id="GO:0042755">
    <property type="term" value="P:eating behavior"/>
    <property type="evidence" value="ECO:0007669"/>
    <property type="project" value="Ensembl"/>
</dbReference>
<dbReference type="GO" id="GO:2000293">
    <property type="term" value="P:negative regulation of defecation"/>
    <property type="evidence" value="ECO:0007669"/>
    <property type="project" value="Ensembl"/>
</dbReference>
<dbReference type="GO" id="GO:1903999">
    <property type="term" value="P:negative regulation of eating behavior"/>
    <property type="evidence" value="ECO:0007669"/>
    <property type="project" value="Ensembl"/>
</dbReference>
<dbReference type="GO" id="GO:0007218">
    <property type="term" value="P:neuropeptide signaling pathway"/>
    <property type="evidence" value="ECO:0000250"/>
    <property type="project" value="UniProtKB"/>
</dbReference>
<dbReference type="GO" id="GO:0070374">
    <property type="term" value="P:positive regulation of ERK1 and ERK2 cascade"/>
    <property type="evidence" value="ECO:0007669"/>
    <property type="project" value="Ensembl"/>
</dbReference>
<dbReference type="GO" id="GO:0051281">
    <property type="term" value="P:positive regulation of release of sequestered calcium ion into cytosol"/>
    <property type="evidence" value="ECO:0000250"/>
    <property type="project" value="UniProtKB"/>
</dbReference>
<dbReference type="GO" id="GO:0060013">
    <property type="term" value="P:righting reflex"/>
    <property type="evidence" value="ECO:0007669"/>
    <property type="project" value="Ensembl"/>
</dbReference>
<dbReference type="CDD" id="cd15197">
    <property type="entry name" value="7tmA_NPSR"/>
    <property type="match status" value="1"/>
</dbReference>
<dbReference type="FunFam" id="1.20.1070.10:FF:000188">
    <property type="entry name" value="Neuropeptide S receptor"/>
    <property type="match status" value="1"/>
</dbReference>
<dbReference type="Gene3D" id="1.20.1070.10">
    <property type="entry name" value="Rhodopsin 7-helix transmembrane proteins"/>
    <property type="match status" value="1"/>
</dbReference>
<dbReference type="InterPro" id="IPR000276">
    <property type="entry name" value="GPCR_Rhodpsn"/>
</dbReference>
<dbReference type="InterPro" id="IPR017452">
    <property type="entry name" value="GPCR_Rhodpsn_7TM"/>
</dbReference>
<dbReference type="InterPro" id="IPR027294">
    <property type="entry name" value="NPS_rcpt"/>
</dbReference>
<dbReference type="InterPro" id="IPR001817">
    <property type="entry name" value="Vasoprsn_rcpt"/>
</dbReference>
<dbReference type="PANTHER" id="PTHR24244">
    <property type="entry name" value="NEUROPEPTIDE S RECEPTOR"/>
    <property type="match status" value="1"/>
</dbReference>
<dbReference type="PANTHER" id="PTHR24244:SF2">
    <property type="entry name" value="NEUROPEPTIDE S RECEPTOR"/>
    <property type="match status" value="1"/>
</dbReference>
<dbReference type="Pfam" id="PF00001">
    <property type="entry name" value="7tm_1"/>
    <property type="match status" value="1"/>
</dbReference>
<dbReference type="PRINTS" id="PR00237">
    <property type="entry name" value="GPCRRHODOPSN"/>
</dbReference>
<dbReference type="PRINTS" id="PR00896">
    <property type="entry name" value="VASOPRESSINR"/>
</dbReference>
<dbReference type="SUPFAM" id="SSF81321">
    <property type="entry name" value="Family A G protein-coupled receptor-like"/>
    <property type="match status" value="1"/>
</dbReference>
<dbReference type="PROSITE" id="PS00237">
    <property type="entry name" value="G_PROTEIN_RECEP_F1_1"/>
    <property type="match status" value="1"/>
</dbReference>
<dbReference type="PROSITE" id="PS50262">
    <property type="entry name" value="G_PROTEIN_RECEP_F1_2"/>
    <property type="match status" value="1"/>
</dbReference>
<comment type="function">
    <text evidence="1">G-protein coupled receptor for neuropeptide S (NPS). Promotes mobilization of intracellular Ca(2+) stores. Inhibits cell growth in response to NPS binding. Involved in pathogenesis of asthma and other IgE-mediated diseases.</text>
</comment>
<comment type="subcellular location">
    <subcellularLocation>
        <location evidence="1">Cell membrane</location>
        <topology evidence="1">Multi-pass membrane protein</topology>
    </subcellularLocation>
</comment>
<comment type="induction">
    <text evidence="4">Increased expression in lung after ovalbumin induction in a mouse model of ovalbumin-induced lung inflammation.</text>
</comment>
<comment type="similarity">
    <text evidence="3">Belongs to the G-protein coupled receptor 1 family. Vasopressin/oxytocin receptor subfamily.</text>
</comment>
<comment type="sequence caution" evidence="5">
    <conflict type="erroneous initiation">
        <sequence resource="EMBL-CDS" id="BAC30949"/>
    </conflict>
</comment>
<name>NPSR1_MOUSE</name>
<proteinExistence type="evidence at transcript level"/>
<sequence length="371" mass="42439">MPANLTEGSFHANQTVPMLDSSPVACTEIVTFTEALVAEEWGSFYSSFKTEQLITLWVLFVVTIVGNSVVLFSTCRRKRKSRMTFFVTQLAITDSFTGLINILTDIIWRFTGDFMAPDLVCRVVRYLQVVLLYASTYVLVSLSIDRYHAIVYPMKFLQGEKQAKVLIGIAWSLSFLFSIPTLIIFGKRTLSNGEVQCWALWPDDSYWTPYMTIVAFLVYFIPLAIISVIYGLVIRTIWMKSKTHETVISNCSDGKLCCSYNRGLISKAKIKAIKYSIVIILAFICCWSPYFLFDILDNFNVLPDTKERFYASVIIQNLPALNSAINPLIYCIFSSSICSPCKMQRSQDSRMTYRERSERHEMQILSKPEFI</sequence>
<evidence type="ECO:0000250" key="1">
    <source>
        <dbReference type="UniProtKB" id="Q6W5P4"/>
    </source>
</evidence>
<evidence type="ECO:0000255" key="2"/>
<evidence type="ECO:0000255" key="3">
    <source>
        <dbReference type="PROSITE-ProRule" id="PRU00521"/>
    </source>
</evidence>
<evidence type="ECO:0000269" key="4">
    <source>
    </source>
</evidence>
<evidence type="ECO:0000305" key="5"/>
<gene>
    <name type="primary">Npsr1</name>
    <name type="synonym">Gpr154</name>
    <name type="synonym">Pgr14</name>
</gene>
<protein>
    <recommendedName>
        <fullName>Neuropeptide S receptor</fullName>
    </recommendedName>
    <alternativeName>
        <fullName>G-protein coupled receptor 154</fullName>
    </alternativeName>
    <alternativeName>
        <fullName>G-protein coupled receptor PGR14</fullName>
    </alternativeName>
</protein>
<keyword id="KW-1003">Cell membrane</keyword>
<keyword id="KW-1015">Disulfide bond</keyword>
<keyword id="KW-0297">G-protein coupled receptor</keyword>
<keyword id="KW-0325">Glycoprotein</keyword>
<keyword id="KW-0472">Membrane</keyword>
<keyword id="KW-0675">Receptor</keyword>
<keyword id="KW-1185">Reference proteome</keyword>
<keyword id="KW-0807">Transducer</keyword>
<keyword id="KW-0812">Transmembrane</keyword>
<keyword id="KW-1133">Transmembrane helix</keyword>
<organism>
    <name type="scientific">Mus musculus</name>
    <name type="common">Mouse</name>
    <dbReference type="NCBI Taxonomy" id="10090"/>
    <lineage>
        <taxon>Eukaryota</taxon>
        <taxon>Metazoa</taxon>
        <taxon>Chordata</taxon>
        <taxon>Craniata</taxon>
        <taxon>Vertebrata</taxon>
        <taxon>Euteleostomi</taxon>
        <taxon>Mammalia</taxon>
        <taxon>Eutheria</taxon>
        <taxon>Euarchontoglires</taxon>
        <taxon>Glires</taxon>
        <taxon>Rodentia</taxon>
        <taxon>Myomorpha</taxon>
        <taxon>Muroidea</taxon>
        <taxon>Muridae</taxon>
        <taxon>Murinae</taxon>
        <taxon>Mus</taxon>
        <taxon>Mus</taxon>
    </lineage>
</organism>
<feature type="chain" id="PRO_0000069641" description="Neuropeptide S receptor">
    <location>
        <begin position="1"/>
        <end position="371"/>
    </location>
</feature>
<feature type="topological domain" description="Extracellular" evidence="2">
    <location>
        <begin position="1"/>
        <end position="52"/>
    </location>
</feature>
<feature type="transmembrane region" description="Helical; Name=1" evidence="2">
    <location>
        <begin position="53"/>
        <end position="73"/>
    </location>
</feature>
<feature type="topological domain" description="Cytoplasmic" evidence="2">
    <location>
        <begin position="74"/>
        <end position="82"/>
    </location>
</feature>
<feature type="transmembrane region" description="Helical; Name=2" evidence="2">
    <location>
        <begin position="83"/>
        <end position="103"/>
    </location>
</feature>
<feature type="topological domain" description="Extracellular" evidence="2">
    <location>
        <begin position="104"/>
        <end position="123"/>
    </location>
</feature>
<feature type="transmembrane region" description="Helical; Name=3" evidence="2">
    <location>
        <begin position="124"/>
        <end position="144"/>
    </location>
</feature>
<feature type="topological domain" description="Cytoplasmic" evidence="2">
    <location>
        <begin position="145"/>
        <end position="164"/>
    </location>
</feature>
<feature type="transmembrane region" description="Helical; Name=4" evidence="2">
    <location>
        <begin position="165"/>
        <end position="185"/>
    </location>
</feature>
<feature type="topological domain" description="Extracellular" evidence="2">
    <location>
        <begin position="186"/>
        <end position="212"/>
    </location>
</feature>
<feature type="transmembrane region" description="Helical; Name=5" evidence="2">
    <location>
        <begin position="213"/>
        <end position="233"/>
    </location>
</feature>
<feature type="topological domain" description="Cytoplasmic" evidence="2">
    <location>
        <begin position="234"/>
        <end position="275"/>
    </location>
</feature>
<feature type="transmembrane region" description="Helical; Name=6" evidence="2">
    <location>
        <begin position="276"/>
        <end position="296"/>
    </location>
</feature>
<feature type="topological domain" description="Extracellular" evidence="2">
    <location>
        <begin position="297"/>
        <end position="312"/>
    </location>
</feature>
<feature type="transmembrane region" description="Helical; Name=7" evidence="2">
    <location>
        <begin position="313"/>
        <end position="333"/>
    </location>
</feature>
<feature type="topological domain" description="Cytoplasmic" evidence="2">
    <location>
        <begin position="334"/>
        <end position="371"/>
    </location>
</feature>
<feature type="glycosylation site" description="N-linked (GlcNAc...) asparagine" evidence="2">
    <location>
        <position position="4"/>
    </location>
</feature>
<feature type="glycosylation site" description="N-linked (GlcNAc...) asparagine" evidence="2">
    <location>
        <position position="13"/>
    </location>
</feature>
<feature type="disulfide bond" evidence="3">
    <location>
        <begin position="121"/>
        <end position="197"/>
    </location>
</feature>
<accession>Q8BZP8</accession>
<accession>Q80T64</accession>
<accession>Q8BYA1</accession>